<name>FABZ_SHEB9</name>
<accession>A9KUL6</accession>
<evidence type="ECO:0000255" key="1">
    <source>
        <dbReference type="HAMAP-Rule" id="MF_00406"/>
    </source>
</evidence>
<proteinExistence type="inferred from homology"/>
<comment type="function">
    <text evidence="1">Involved in unsaturated fatty acids biosynthesis. Catalyzes the dehydration of short chain beta-hydroxyacyl-ACPs and long chain saturated and unsaturated beta-hydroxyacyl-ACPs.</text>
</comment>
<comment type="catalytic activity">
    <reaction evidence="1">
        <text>a (3R)-hydroxyacyl-[ACP] = a (2E)-enoyl-[ACP] + H2O</text>
        <dbReference type="Rhea" id="RHEA:13097"/>
        <dbReference type="Rhea" id="RHEA-COMP:9925"/>
        <dbReference type="Rhea" id="RHEA-COMP:9945"/>
        <dbReference type="ChEBI" id="CHEBI:15377"/>
        <dbReference type="ChEBI" id="CHEBI:78784"/>
        <dbReference type="ChEBI" id="CHEBI:78827"/>
        <dbReference type="EC" id="4.2.1.59"/>
    </reaction>
</comment>
<comment type="subcellular location">
    <subcellularLocation>
        <location evidence="1">Cytoplasm</location>
    </subcellularLocation>
</comment>
<comment type="similarity">
    <text evidence="1">Belongs to the thioester dehydratase family. FabZ subfamily.</text>
</comment>
<keyword id="KW-0963">Cytoplasm</keyword>
<keyword id="KW-0441">Lipid A biosynthesis</keyword>
<keyword id="KW-0444">Lipid biosynthesis</keyword>
<keyword id="KW-0443">Lipid metabolism</keyword>
<keyword id="KW-0456">Lyase</keyword>
<feature type="chain" id="PRO_1000080449" description="3-hydroxyacyl-[acyl-carrier-protein] dehydratase FabZ">
    <location>
        <begin position="1"/>
        <end position="154"/>
    </location>
</feature>
<feature type="active site" evidence="1">
    <location>
        <position position="54"/>
    </location>
</feature>
<dbReference type="EC" id="4.2.1.59" evidence="1"/>
<dbReference type="EMBL" id="CP000891">
    <property type="protein sequence ID" value="ABX48665.1"/>
    <property type="molecule type" value="Genomic_DNA"/>
</dbReference>
<dbReference type="RefSeq" id="WP_006080990.1">
    <property type="nucleotide sequence ID" value="NC_009997.1"/>
</dbReference>
<dbReference type="SMR" id="A9KUL6"/>
<dbReference type="GeneID" id="11771739"/>
<dbReference type="KEGG" id="sbn:Sbal195_1492"/>
<dbReference type="HOGENOM" id="CLU_078912_1_0_6"/>
<dbReference type="Proteomes" id="UP000000770">
    <property type="component" value="Chromosome"/>
</dbReference>
<dbReference type="GO" id="GO:0005737">
    <property type="term" value="C:cytoplasm"/>
    <property type="evidence" value="ECO:0007669"/>
    <property type="project" value="UniProtKB-SubCell"/>
</dbReference>
<dbReference type="GO" id="GO:0016020">
    <property type="term" value="C:membrane"/>
    <property type="evidence" value="ECO:0007669"/>
    <property type="project" value="GOC"/>
</dbReference>
<dbReference type="GO" id="GO:0019171">
    <property type="term" value="F:(3R)-hydroxyacyl-[acyl-carrier-protein] dehydratase activity"/>
    <property type="evidence" value="ECO:0007669"/>
    <property type="project" value="UniProtKB-EC"/>
</dbReference>
<dbReference type="GO" id="GO:0006633">
    <property type="term" value="P:fatty acid biosynthetic process"/>
    <property type="evidence" value="ECO:0007669"/>
    <property type="project" value="UniProtKB-UniRule"/>
</dbReference>
<dbReference type="GO" id="GO:0009245">
    <property type="term" value="P:lipid A biosynthetic process"/>
    <property type="evidence" value="ECO:0007669"/>
    <property type="project" value="UniProtKB-UniRule"/>
</dbReference>
<dbReference type="CDD" id="cd01288">
    <property type="entry name" value="FabZ"/>
    <property type="match status" value="1"/>
</dbReference>
<dbReference type="FunFam" id="3.10.129.10:FF:000001">
    <property type="entry name" value="3-hydroxyacyl-[acyl-carrier-protein] dehydratase FabZ"/>
    <property type="match status" value="1"/>
</dbReference>
<dbReference type="Gene3D" id="3.10.129.10">
    <property type="entry name" value="Hotdog Thioesterase"/>
    <property type="match status" value="1"/>
</dbReference>
<dbReference type="HAMAP" id="MF_00406">
    <property type="entry name" value="FabZ"/>
    <property type="match status" value="1"/>
</dbReference>
<dbReference type="InterPro" id="IPR013114">
    <property type="entry name" value="FabA_FabZ"/>
</dbReference>
<dbReference type="InterPro" id="IPR010084">
    <property type="entry name" value="FabZ"/>
</dbReference>
<dbReference type="InterPro" id="IPR029069">
    <property type="entry name" value="HotDog_dom_sf"/>
</dbReference>
<dbReference type="NCBIfam" id="TIGR01750">
    <property type="entry name" value="fabZ"/>
    <property type="match status" value="1"/>
</dbReference>
<dbReference type="NCBIfam" id="NF000582">
    <property type="entry name" value="PRK00006.1"/>
    <property type="match status" value="1"/>
</dbReference>
<dbReference type="PANTHER" id="PTHR30272">
    <property type="entry name" value="3-HYDROXYACYL-[ACYL-CARRIER-PROTEIN] DEHYDRATASE"/>
    <property type="match status" value="1"/>
</dbReference>
<dbReference type="PANTHER" id="PTHR30272:SF1">
    <property type="entry name" value="3-HYDROXYACYL-[ACYL-CARRIER-PROTEIN] DEHYDRATASE"/>
    <property type="match status" value="1"/>
</dbReference>
<dbReference type="Pfam" id="PF07977">
    <property type="entry name" value="FabA"/>
    <property type="match status" value="1"/>
</dbReference>
<dbReference type="SUPFAM" id="SSF54637">
    <property type="entry name" value="Thioesterase/thiol ester dehydrase-isomerase"/>
    <property type="match status" value="1"/>
</dbReference>
<protein>
    <recommendedName>
        <fullName evidence="1">3-hydroxyacyl-[acyl-carrier-protein] dehydratase FabZ</fullName>
        <ecNumber evidence="1">4.2.1.59</ecNumber>
    </recommendedName>
    <alternativeName>
        <fullName evidence="1">(3R)-hydroxymyristoyl-[acyl-carrier-protein] dehydratase</fullName>
        <shortName evidence="1">(3R)-hydroxymyristoyl-ACP dehydrase</shortName>
    </alternativeName>
    <alternativeName>
        <fullName evidence="1">Beta-hydroxyacyl-ACP dehydratase</fullName>
    </alternativeName>
</protein>
<sequence>MSNQMNTMDIKEILKYLPHRYPFLLIDRVLDYTPGVSLQAIKNVSINEPFFQGHFPIQPVMPGVLILEAMAQATGLLAFKTMSSDVPPPGVLYYFAGIDNARFRRVVEPGDQIHFDVKMIKERRGIGVFYGEAKVDGEVVCSAEIMCARREISQ</sequence>
<organism>
    <name type="scientific">Shewanella baltica (strain OS195)</name>
    <dbReference type="NCBI Taxonomy" id="399599"/>
    <lineage>
        <taxon>Bacteria</taxon>
        <taxon>Pseudomonadati</taxon>
        <taxon>Pseudomonadota</taxon>
        <taxon>Gammaproteobacteria</taxon>
        <taxon>Alteromonadales</taxon>
        <taxon>Shewanellaceae</taxon>
        <taxon>Shewanella</taxon>
    </lineage>
</organism>
<reference key="1">
    <citation type="submission" date="2007-11" db="EMBL/GenBank/DDBJ databases">
        <title>Complete sequence of chromosome of Shewanella baltica OS195.</title>
        <authorList>
            <consortium name="US DOE Joint Genome Institute"/>
            <person name="Copeland A."/>
            <person name="Lucas S."/>
            <person name="Lapidus A."/>
            <person name="Barry K."/>
            <person name="Glavina del Rio T."/>
            <person name="Dalin E."/>
            <person name="Tice H."/>
            <person name="Pitluck S."/>
            <person name="Chain P."/>
            <person name="Malfatti S."/>
            <person name="Shin M."/>
            <person name="Vergez L."/>
            <person name="Schmutz J."/>
            <person name="Larimer F."/>
            <person name="Land M."/>
            <person name="Hauser L."/>
            <person name="Kyrpides N."/>
            <person name="Kim E."/>
            <person name="Brettar I."/>
            <person name="Rodrigues J."/>
            <person name="Konstantinidis K."/>
            <person name="Klappenbach J."/>
            <person name="Hofle M."/>
            <person name="Tiedje J."/>
            <person name="Richardson P."/>
        </authorList>
    </citation>
    <scope>NUCLEOTIDE SEQUENCE [LARGE SCALE GENOMIC DNA]</scope>
    <source>
        <strain>OS195</strain>
    </source>
</reference>
<gene>
    <name evidence="1" type="primary">fabZ</name>
    <name type="ordered locus">Sbal195_1492</name>
</gene>